<protein>
    <recommendedName>
        <fullName>U3 small nucleolar RNA-associated protein 25</fullName>
        <shortName>U3 snoRNA-associated protein 25</shortName>
    </recommendedName>
    <alternativeName>
        <fullName>U three protein 25</fullName>
    </alternativeName>
</protein>
<name>UTP25_YEAS1</name>
<reference key="1">
    <citation type="submission" date="2005-03" db="EMBL/GenBank/DDBJ databases">
        <title>Annotation of the Saccharomyces cerevisiae RM11-1a genome.</title>
        <authorList>
            <consortium name="The Broad Institute Genome Sequencing Platform"/>
            <person name="Birren B.W."/>
            <person name="Lander E.S."/>
            <person name="Galagan J.E."/>
            <person name="Nusbaum C."/>
            <person name="Devon K."/>
            <person name="Cuomo C."/>
            <person name="Jaffe D.B."/>
            <person name="Butler J."/>
            <person name="Alvarez P."/>
            <person name="Gnerre S."/>
            <person name="Grabherr M."/>
            <person name="Kleber M."/>
            <person name="Mauceli E.W."/>
            <person name="Brockman W."/>
            <person name="MacCallum I.A."/>
            <person name="Rounsley S."/>
            <person name="Young S.K."/>
            <person name="LaButti K."/>
            <person name="Pushparaj V."/>
            <person name="DeCaprio D."/>
            <person name="Crawford M."/>
            <person name="Koehrsen M."/>
            <person name="Engels R."/>
            <person name="Montgomery P."/>
            <person name="Pearson M."/>
            <person name="Howarth C."/>
            <person name="Larson L."/>
            <person name="Luoma S."/>
            <person name="White J."/>
            <person name="O'Leary S."/>
            <person name="Kodira C.D."/>
            <person name="Zeng Q."/>
            <person name="Yandava C."/>
            <person name="Alvarado L."/>
            <person name="Pratt S."/>
            <person name="Kruglyak L."/>
        </authorList>
    </citation>
    <scope>NUCLEOTIDE SEQUENCE [LARGE SCALE GENOMIC DNA]</scope>
    <source>
        <strain>RM11-1a</strain>
    </source>
</reference>
<proteinExistence type="inferred from homology"/>
<sequence>MSDSSVREKNDNFRGYRKRGRQELRKIKRSSARTEGGSTETLEDVAEDIDHRSDEDEVSDVDSGDDFDIEDEEGKKEKVYDALLTILKSEHPEPKRRRREADESNKAPAEVGEDEHENTEHGPVDDQLEIENGLLGNHEDDNDDDSSEDEKDIDSEDEQDPFESHFNQVPEKFVDELSNAFKTKSVKYKSVKGSLSDSESYIYAKPVVIGEEALVESPYRSSSIYSYFLKQRLKVQNGLLDKKTDPLTALQKKLVDPMFQYKDILYEYDSYEKDEDEYRDLYALHVLNHIYKTRDRILKNNQRLQDNPDTEHLDQGFTRPKVLIVVPTREVAYRVVDKIISKSGIDQVDKKGKFYDQFRDDSLPPKSKPKSFQHIFRGNTNDFFVVGLKFTRKAIKLYSNFYQSDIIVCSPLGIQMILENTDKKKRQDDFLSSIELMVIDQLHSIEYQNISHIFTIFDHLNKIPDQQHEADFSRIRMWYINEQAKLFRQTMVFTKYISPAANSLINGRCRNMAGRWKNHKIIGSENSSIGQSGLKIRQIFQRFDIIGNSIIEEPDYRFKFFTSVIIPGIVKSTGYEDGILIYIPDYTDFIRIRNYMKEKTTILFGDINEYSSQRQLNANRSLFQQGRLKVMLYTERLHHYRRYEIKGVKSVVFYKPPNNPEFYNEVVRFIGKNAFLGNTDLNISTVRCIYSKLDGLSLERIVGTKRAAVLSHAQKEIYEFK</sequence>
<evidence type="ECO:0000250" key="1"/>
<evidence type="ECO:0000250" key="2">
    <source>
        <dbReference type="UniProtKB" id="P40498"/>
    </source>
</evidence>
<evidence type="ECO:0000256" key="3">
    <source>
        <dbReference type="SAM" id="MobiDB-lite"/>
    </source>
</evidence>
<evidence type="ECO:0000305" key="4"/>
<gene>
    <name type="primary">UTP25</name>
    <name type="ORF">SCRG_05263</name>
</gene>
<comment type="function">
    <text evidence="1">DEAD-box RNA helicase-like protein required for pre-18S rRNA processing, specifically at sites A0, A1, and A2.</text>
</comment>
<comment type="subunit">
    <text evidence="1">Interacts with snoRNA U3. Interacts with MPP10, RRp9, UTP8 and UTP18. Component of the ribosomal small subunit (SSU) processome composed of at least 40 protein subunits and snoRNA U3.</text>
</comment>
<comment type="subcellular location">
    <subcellularLocation>
        <location evidence="1">Nucleus</location>
        <location evidence="1">Nucleolus</location>
    </subcellularLocation>
</comment>
<comment type="similarity">
    <text evidence="4">Belongs to the UTP25 family.</text>
</comment>
<keyword id="KW-0539">Nucleus</keyword>
<keyword id="KW-0597">Phosphoprotein</keyword>
<keyword id="KW-0687">Ribonucleoprotein</keyword>
<keyword id="KW-0690">Ribosome biogenesis</keyword>
<keyword id="KW-0698">rRNA processing</keyword>
<organism>
    <name type="scientific">Saccharomyces cerevisiae (strain RM11-1a)</name>
    <name type="common">Baker's yeast</name>
    <dbReference type="NCBI Taxonomy" id="285006"/>
    <lineage>
        <taxon>Eukaryota</taxon>
        <taxon>Fungi</taxon>
        <taxon>Dikarya</taxon>
        <taxon>Ascomycota</taxon>
        <taxon>Saccharomycotina</taxon>
        <taxon>Saccharomycetes</taxon>
        <taxon>Saccharomycetales</taxon>
        <taxon>Saccharomycetaceae</taxon>
        <taxon>Saccharomyces</taxon>
    </lineage>
</organism>
<feature type="chain" id="PRO_0000408146" description="U3 small nucleolar RNA-associated protein 25">
    <location>
        <begin position="1"/>
        <end position="721"/>
    </location>
</feature>
<feature type="region of interest" description="Disordered" evidence="3">
    <location>
        <begin position="1"/>
        <end position="168"/>
    </location>
</feature>
<feature type="compositionally biased region" description="Basic and acidic residues" evidence="3">
    <location>
        <begin position="1"/>
        <end position="14"/>
    </location>
</feature>
<feature type="compositionally biased region" description="Basic residues" evidence="3">
    <location>
        <begin position="15"/>
        <end position="31"/>
    </location>
</feature>
<feature type="compositionally biased region" description="Acidic residues" evidence="3">
    <location>
        <begin position="55"/>
        <end position="72"/>
    </location>
</feature>
<feature type="compositionally biased region" description="Basic and acidic residues" evidence="3">
    <location>
        <begin position="88"/>
        <end position="105"/>
    </location>
</feature>
<feature type="compositionally biased region" description="Acidic residues" evidence="3">
    <location>
        <begin position="140"/>
        <end position="161"/>
    </location>
</feature>
<feature type="modified residue" description="Phosphoserine" evidence="2">
    <location>
        <position position="53"/>
    </location>
</feature>
<feature type="modified residue" description="Phosphoserine" evidence="2">
    <location>
        <position position="63"/>
    </location>
</feature>
<feature type="modified residue" description="Phosphoserine" evidence="2">
    <location>
        <position position="196"/>
    </location>
</feature>
<dbReference type="EMBL" id="CH408055">
    <property type="protein sequence ID" value="EDV09569.1"/>
    <property type="molecule type" value="Genomic_DNA"/>
</dbReference>
<dbReference type="HOGENOM" id="CLU_018705_0_1_1"/>
<dbReference type="OrthoDB" id="30001at4893"/>
<dbReference type="Proteomes" id="UP000008335">
    <property type="component" value="Unassembled WGS sequence"/>
</dbReference>
<dbReference type="GO" id="GO:0005730">
    <property type="term" value="C:nucleolus"/>
    <property type="evidence" value="ECO:0007669"/>
    <property type="project" value="UniProtKB-SubCell"/>
</dbReference>
<dbReference type="GO" id="GO:0032040">
    <property type="term" value="C:small-subunit processome"/>
    <property type="evidence" value="ECO:0007669"/>
    <property type="project" value="TreeGrafter"/>
</dbReference>
<dbReference type="GO" id="GO:0019843">
    <property type="term" value="F:rRNA binding"/>
    <property type="evidence" value="ECO:0007669"/>
    <property type="project" value="TreeGrafter"/>
</dbReference>
<dbReference type="GO" id="GO:0034511">
    <property type="term" value="F:U3 snoRNA binding"/>
    <property type="evidence" value="ECO:0007669"/>
    <property type="project" value="InterPro"/>
</dbReference>
<dbReference type="GO" id="GO:0000462">
    <property type="term" value="P:maturation of SSU-rRNA from tricistronic rRNA transcript (SSU-rRNA, 5.8S rRNA, LSU-rRNA)"/>
    <property type="evidence" value="ECO:0007669"/>
    <property type="project" value="TreeGrafter"/>
</dbReference>
<dbReference type="FunFam" id="3.40.50.300:FF:002072">
    <property type="entry name" value="U3 small nucleolar RNA-associated protein 25"/>
    <property type="match status" value="1"/>
</dbReference>
<dbReference type="Gene3D" id="3.40.50.300">
    <property type="entry name" value="P-loop containing nucleotide triphosphate hydrolases"/>
    <property type="match status" value="1"/>
</dbReference>
<dbReference type="InterPro" id="IPR027417">
    <property type="entry name" value="P-loop_NTPase"/>
</dbReference>
<dbReference type="InterPro" id="IPR010678">
    <property type="entry name" value="UTP25"/>
</dbReference>
<dbReference type="InterPro" id="IPR053939">
    <property type="entry name" value="UTP25_C"/>
</dbReference>
<dbReference type="InterPro" id="IPR053940">
    <property type="entry name" value="UTP25_NTPase-like"/>
</dbReference>
<dbReference type="PANTHER" id="PTHR12933">
    <property type="entry name" value="ORF PROTEIN-RELATED"/>
    <property type="match status" value="1"/>
</dbReference>
<dbReference type="PANTHER" id="PTHR12933:SF0">
    <property type="entry name" value="U3 SMALL NUCLEOLAR RNA-ASSOCIATED PROTEIN 25 HOMOLOG"/>
    <property type="match status" value="1"/>
</dbReference>
<dbReference type="Pfam" id="PF06862">
    <property type="entry name" value="Utp25_C"/>
    <property type="match status" value="1"/>
</dbReference>
<dbReference type="Pfam" id="PF22916">
    <property type="entry name" value="UTP25_NTPase-like"/>
    <property type="match status" value="1"/>
</dbReference>
<dbReference type="SUPFAM" id="SSF52540">
    <property type="entry name" value="P-loop containing nucleoside triphosphate hydrolases"/>
    <property type="match status" value="1"/>
</dbReference>
<accession>B3LTT8</accession>